<keyword id="KW-0227">DNA damage</keyword>
<keyword id="KW-0233">DNA recombination</keyword>
<keyword id="KW-0234">DNA repair</keyword>
<keyword id="KW-0235">DNA replication</keyword>
<keyword id="KW-0238">DNA-binding</keyword>
<keyword id="KW-0479">Metal-binding</keyword>
<keyword id="KW-0539">Nucleus</keyword>
<keyword id="KW-1185">Reference proteome</keyword>
<keyword id="KW-0862">Zinc</keyword>
<keyword id="KW-0863">Zinc-finger</keyword>
<accession>Q01588</accession>
<dbReference type="EMBL" id="X67240">
    <property type="protein sequence ID" value="CAA47665.1"/>
    <property type="molecule type" value="mRNA"/>
</dbReference>
<dbReference type="PIR" id="A43458">
    <property type="entry name" value="A43458"/>
</dbReference>
<dbReference type="SMR" id="Q01588"/>
<dbReference type="BioGRID" id="99273">
    <property type="interactions" value="4"/>
</dbReference>
<dbReference type="DNASU" id="397937"/>
<dbReference type="GeneID" id="397937"/>
<dbReference type="KEGG" id="xla:397937"/>
<dbReference type="AGR" id="Xenbase:XB-GENE-945055"/>
<dbReference type="CTD" id="397937"/>
<dbReference type="Xenbase" id="XB-GENE-945055">
    <property type="gene designation" value="rpa1.L"/>
</dbReference>
<dbReference type="OrthoDB" id="1751331at2759"/>
<dbReference type="CD-CODE" id="78E86D56">
    <property type="entry name" value="Mitochondrial cloud"/>
</dbReference>
<dbReference type="Proteomes" id="UP000186698">
    <property type="component" value="Chromosome 2L"/>
</dbReference>
<dbReference type="Bgee" id="397937">
    <property type="expression patterns" value="Expressed in ovary and 19 other cell types or tissues"/>
</dbReference>
<dbReference type="GO" id="GO:0005662">
    <property type="term" value="C:DNA replication factor A complex"/>
    <property type="evidence" value="ECO:0000250"/>
    <property type="project" value="UniProtKB"/>
</dbReference>
<dbReference type="GO" id="GO:0005634">
    <property type="term" value="C:nucleus"/>
    <property type="evidence" value="ECO:0000250"/>
    <property type="project" value="UniProtKB"/>
</dbReference>
<dbReference type="GO" id="GO:0016605">
    <property type="term" value="C:PML body"/>
    <property type="evidence" value="ECO:0007669"/>
    <property type="project" value="UniProtKB-SubCell"/>
</dbReference>
<dbReference type="GO" id="GO:0003684">
    <property type="term" value="F:damaged DNA binding"/>
    <property type="evidence" value="ECO:0000250"/>
    <property type="project" value="UniProtKB"/>
</dbReference>
<dbReference type="GO" id="GO:0003697">
    <property type="term" value="F:single-stranded DNA binding"/>
    <property type="evidence" value="ECO:0000250"/>
    <property type="project" value="UniProtKB"/>
</dbReference>
<dbReference type="GO" id="GO:0043047">
    <property type="term" value="F:single-stranded telomeric DNA binding"/>
    <property type="evidence" value="ECO:0000318"/>
    <property type="project" value="GO_Central"/>
</dbReference>
<dbReference type="GO" id="GO:0008270">
    <property type="term" value="F:zinc ion binding"/>
    <property type="evidence" value="ECO:0007669"/>
    <property type="project" value="UniProtKB-KW"/>
</dbReference>
<dbReference type="GO" id="GO:0006260">
    <property type="term" value="P:DNA replication"/>
    <property type="evidence" value="ECO:0000250"/>
    <property type="project" value="UniProtKB"/>
</dbReference>
<dbReference type="GO" id="GO:0000724">
    <property type="term" value="P:double-strand break repair via homologous recombination"/>
    <property type="evidence" value="ECO:0000318"/>
    <property type="project" value="GO_Central"/>
</dbReference>
<dbReference type="GO" id="GO:0051321">
    <property type="term" value="P:meiotic cell cycle"/>
    <property type="evidence" value="ECO:0000318"/>
    <property type="project" value="GO_Central"/>
</dbReference>
<dbReference type="GO" id="GO:0006289">
    <property type="term" value="P:nucleotide-excision repair"/>
    <property type="evidence" value="ECO:0000318"/>
    <property type="project" value="GO_Central"/>
</dbReference>
<dbReference type="GO" id="GO:0034502">
    <property type="term" value="P:protein localization to chromosome"/>
    <property type="evidence" value="ECO:0000250"/>
    <property type="project" value="UniProtKB"/>
</dbReference>
<dbReference type="GO" id="GO:0007004">
    <property type="term" value="P:telomere maintenance via telomerase"/>
    <property type="evidence" value="ECO:0000318"/>
    <property type="project" value="GO_Central"/>
</dbReference>
<dbReference type="CDD" id="cd04474">
    <property type="entry name" value="RPA1_DBD_A"/>
    <property type="match status" value="1"/>
</dbReference>
<dbReference type="CDD" id="cd04475">
    <property type="entry name" value="RPA1_DBD_B"/>
    <property type="match status" value="1"/>
</dbReference>
<dbReference type="CDD" id="cd04476">
    <property type="entry name" value="RPA1_DBD_C"/>
    <property type="match status" value="1"/>
</dbReference>
<dbReference type="CDD" id="cd04477">
    <property type="entry name" value="RPA1N"/>
    <property type="match status" value="1"/>
</dbReference>
<dbReference type="FunFam" id="2.40.50.140:FF:000041">
    <property type="entry name" value="Replication protein A subunit"/>
    <property type="match status" value="1"/>
</dbReference>
<dbReference type="FunFam" id="2.40.50.140:FF:000064">
    <property type="entry name" value="Replication protein A subunit"/>
    <property type="match status" value="1"/>
</dbReference>
<dbReference type="FunFam" id="2.40.50.140:FF:000090">
    <property type="entry name" value="Replication protein A subunit"/>
    <property type="match status" value="1"/>
</dbReference>
<dbReference type="FunFam" id="2.40.50.140:FF:000117">
    <property type="entry name" value="Replication protein A subunit"/>
    <property type="match status" value="1"/>
</dbReference>
<dbReference type="Gene3D" id="2.40.50.140">
    <property type="entry name" value="Nucleic acid-binding proteins"/>
    <property type="match status" value="4"/>
</dbReference>
<dbReference type="InterPro" id="IPR047192">
    <property type="entry name" value="Euk_RPA1_DBD_C"/>
</dbReference>
<dbReference type="InterPro" id="IPR012340">
    <property type="entry name" value="NA-bd_OB-fold"/>
</dbReference>
<dbReference type="InterPro" id="IPR004365">
    <property type="entry name" value="NA-bd_OB_tRNA"/>
</dbReference>
<dbReference type="InterPro" id="IPR013955">
    <property type="entry name" value="Rep_factor-A_C"/>
</dbReference>
<dbReference type="InterPro" id="IPR007199">
    <property type="entry name" value="Rep_factor-A_N"/>
</dbReference>
<dbReference type="InterPro" id="IPR031657">
    <property type="entry name" value="REPA_OB_2"/>
</dbReference>
<dbReference type="InterPro" id="IPR004591">
    <property type="entry name" value="Rfa1"/>
</dbReference>
<dbReference type="NCBIfam" id="TIGR00617">
    <property type="entry name" value="rpa1"/>
    <property type="match status" value="1"/>
</dbReference>
<dbReference type="PANTHER" id="PTHR47165">
    <property type="entry name" value="OS03G0429900 PROTEIN"/>
    <property type="match status" value="1"/>
</dbReference>
<dbReference type="PANTHER" id="PTHR47165:SF4">
    <property type="entry name" value="OS03G0429900 PROTEIN"/>
    <property type="match status" value="1"/>
</dbReference>
<dbReference type="Pfam" id="PF04057">
    <property type="entry name" value="Rep-A_N"/>
    <property type="match status" value="1"/>
</dbReference>
<dbReference type="Pfam" id="PF08646">
    <property type="entry name" value="Rep_fac-A_C"/>
    <property type="match status" value="1"/>
</dbReference>
<dbReference type="Pfam" id="PF16900">
    <property type="entry name" value="REPA_OB_2"/>
    <property type="match status" value="1"/>
</dbReference>
<dbReference type="Pfam" id="PF01336">
    <property type="entry name" value="tRNA_anti-codon"/>
    <property type="match status" value="1"/>
</dbReference>
<dbReference type="SUPFAM" id="SSF50249">
    <property type="entry name" value="Nucleic acid-binding proteins"/>
    <property type="match status" value="4"/>
</dbReference>
<gene>
    <name type="primary">rpa1</name>
</gene>
<comment type="function">
    <text evidence="1">As part of the heterotrimeric replication protein A complex (RPA/RP-A), binds and stabilizes single-stranded DNA intermediates, that form during DNA replication or upon DNA stress. It prevents their reannealing and in parallel, recruits and activates different proteins and complexes involved in DNA metabolism. Thereby, it plays an essential role both in DNA replication and the cellular response to DNA damage.</text>
</comment>
<comment type="subunit">
    <text evidence="1 4">Component of the heterotrimeric canonical replication protein A complex (RPA) (By similarity). Interacts with rpain-a (PubMed:10428972).</text>
</comment>
<comment type="subcellular location">
    <subcellularLocation>
        <location evidence="1">Nucleus</location>
    </subcellularLocation>
    <subcellularLocation>
        <location evidence="1">Nucleus</location>
        <location evidence="1">PML body</location>
    </subcellularLocation>
</comment>
<comment type="similarity">
    <text evidence="5">Belongs to the replication factor A protein 1 family.</text>
</comment>
<sequence>MALPQLSEGAISAMLGGDSSCKPTLQVINIRPINTGNGPPRYRLLMSDGLNTLSSFMLATQLNSLVDNNLLATNCICQVSRFIVNNLKDGRRVIIVMELDVLKSADLVMGKIGNPQPYNDGQPQPAAPAPASAPAPAPSKLQNNSAPPPSMNRGTSKLFGGGSLLNTPGGSQSKVVPIASLNPYQSKWTVRARVTNKGQIRTWSNSRGEGKLFSIEMVDESGEIRATAFNEQADKFFSIIEVNKVYYFSKGTLKIANKQYTSVKNDYEMTFNSETSVIPCDDSADVPMVQFEFVSIGELESKNKDTVLDIIGVCKNVEEVTKVTIKSNNREVSKRSIHLMDSSGKVVSTTLWGEDADKFDGSRQPVVAIKGARLSDFGGRSLSVLSSSTVMINPDIPEAFKLRAWFDSEGQVVEGTSISESRGGGTGGGNTNWKSLLEVKNENLGHGEKADYFTSVATIVYLRKENCLYQACPSQDCNKKVIDQQNGLFRCEKCNKEFPNFKYRLILSANIADFGENQWITCFQESAESILGQNATYLGELKEKNEQAYDEVFQNANFRSYTFRARVKLETYNDESRIKATAVDVKPVDHKEYSRRLIMNIRKMATQGV</sequence>
<evidence type="ECO:0000250" key="1">
    <source>
        <dbReference type="UniProtKB" id="P27694"/>
    </source>
</evidence>
<evidence type="ECO:0000255" key="2"/>
<evidence type="ECO:0000256" key="3">
    <source>
        <dbReference type="SAM" id="MobiDB-lite"/>
    </source>
</evidence>
<evidence type="ECO:0000269" key="4">
    <source>
    </source>
</evidence>
<evidence type="ECO:0000305" key="5"/>
<protein>
    <recommendedName>
        <fullName>Replication protein A 70 kDa DNA-binding subunit</fullName>
        <shortName>RP-A p70</shortName>
    </recommendedName>
    <alternativeName>
        <fullName>Replication factor A protein 1</fullName>
        <shortName>RF-A protein 1</shortName>
    </alternativeName>
    <alternativeName>
        <fullName>Single-stranded DNA-binding protein</fullName>
    </alternativeName>
</protein>
<proteinExistence type="evidence at protein level"/>
<feature type="chain" id="PRO_0000097267" description="Replication protein A 70 kDa DNA-binding subunit">
    <location>
        <begin position="1"/>
        <end position="609"/>
    </location>
</feature>
<feature type="DNA-binding region" description="OB">
    <location>
        <begin position="188"/>
        <end position="272"/>
    </location>
</feature>
<feature type="zinc finger region" description="C4-type" evidence="2">
    <location>
        <begin position="472"/>
        <end position="494"/>
    </location>
</feature>
<feature type="region of interest" description="Disordered" evidence="3">
    <location>
        <begin position="113"/>
        <end position="163"/>
    </location>
</feature>
<feature type="compositionally biased region" description="Pro residues" evidence="3">
    <location>
        <begin position="125"/>
        <end position="137"/>
    </location>
</feature>
<organism>
    <name type="scientific">Xenopus laevis</name>
    <name type="common">African clawed frog</name>
    <dbReference type="NCBI Taxonomy" id="8355"/>
    <lineage>
        <taxon>Eukaryota</taxon>
        <taxon>Metazoa</taxon>
        <taxon>Chordata</taxon>
        <taxon>Craniata</taxon>
        <taxon>Vertebrata</taxon>
        <taxon>Euteleostomi</taxon>
        <taxon>Amphibia</taxon>
        <taxon>Batrachia</taxon>
        <taxon>Anura</taxon>
        <taxon>Pipoidea</taxon>
        <taxon>Pipidae</taxon>
        <taxon>Xenopodinae</taxon>
        <taxon>Xenopus</taxon>
        <taxon>Xenopus</taxon>
    </lineage>
</organism>
<reference key="1">
    <citation type="journal article" date="1992" name="J. Cell Biol.">
        <title>Identification of nuclear pre-replication centers poised for DNA synthesis in Xenopus egg extracts: immunolocalization study of replication protein A.</title>
        <authorList>
            <person name="Adachi Y."/>
            <person name="Laemmli U.K."/>
        </authorList>
    </citation>
    <scope>NUCLEOTIDE SEQUENCE [MRNA]</scope>
    <source>
        <tissue>Oocyte</tissue>
    </source>
</reference>
<reference key="2">
    <citation type="journal article" date="1999" name="EMBO J.">
        <title>Nuclear import of RPA in Xenopus egg extracts requires a novel protein XRIPalpha but not importin alpha.</title>
        <authorList>
            <person name="Jullien D."/>
            <person name="Goerlich D."/>
            <person name="Laemmli U.K."/>
            <person name="Adachi Y."/>
        </authorList>
    </citation>
    <scope>INTERACTION WITH RIP</scope>
</reference>
<name>RFA1_XENLA</name>